<sequence>MAATPHRHLLQPCKNPAISSSETLKPSSSFSLSSNPSIPLIRRRLPTFRCDFQNRRKWMNVDHHISKLNPIQIVPNSRRFQMSSNQENSVEFSKKVCLFYCPETKALAERIAAQSDAIQLRSISWRTFEDGFPNLFISNAQGIRGKHVAFLASFSSPGVIFEQLSVIYALPKLFVASFKLVLPFFPTGTSERMEDEGDVATAFTLARILSNIPISREGPTSLVTFDIHALQERFYFGDNILPCFESGIPLLKKKLQQLPDSDNITIAFPDDGAWKRFHKQLQHFPMIVCAKVREGDQRIVRLKEGDPTGRHVVIVDDLVQSGGTLIECQKVLAAHGAAKVSAYVTHGIFPNKSWERFKPDTAGCPEEGMTHFWITDSCPLTVKMVKNRPPFEVISLAGSIAAALQI</sequence>
<accession>Q9XGA0</accession>
<protein>
    <recommendedName>
        <fullName>Ribose-phosphate pyrophosphokinase 3, mitochondrial</fullName>
        <ecNumber>2.7.6.1</ecNumber>
    </recommendedName>
    <alternativeName>
        <fullName>Phosphoribosyl pyrophosphate synthase 3</fullName>
    </alternativeName>
</protein>
<keyword id="KW-0067">ATP-binding</keyword>
<keyword id="KW-0418">Kinase</keyword>
<keyword id="KW-0460">Magnesium</keyword>
<keyword id="KW-0479">Metal-binding</keyword>
<keyword id="KW-0496">Mitochondrion</keyword>
<keyword id="KW-0545">Nucleotide biosynthesis</keyword>
<keyword id="KW-0547">Nucleotide-binding</keyword>
<keyword id="KW-1185">Reference proteome</keyword>
<keyword id="KW-0808">Transferase</keyword>
<keyword id="KW-0809">Transit peptide</keyword>
<evidence type="ECO:0000255" key="1"/>
<evidence type="ECO:0000256" key="2">
    <source>
        <dbReference type="SAM" id="MobiDB-lite"/>
    </source>
</evidence>
<evidence type="ECO:0000305" key="3"/>
<feature type="transit peptide" description="Mitochondrion" evidence="1">
    <location>
        <begin position="1"/>
        <end position="87"/>
    </location>
</feature>
<feature type="chain" id="PRO_0000016846" description="Ribose-phosphate pyrophosphokinase 3, mitochondrial">
    <location>
        <begin position="88"/>
        <end position="406"/>
    </location>
</feature>
<feature type="region of interest" description="Disordered" evidence="2">
    <location>
        <begin position="1"/>
        <end position="32"/>
    </location>
</feature>
<feature type="region of interest" description="Binding of phosphoribosylpyrophosphate" evidence="1">
    <location>
        <begin position="309"/>
        <end position="324"/>
    </location>
</feature>
<feature type="compositionally biased region" description="Low complexity" evidence="2">
    <location>
        <begin position="18"/>
        <end position="32"/>
    </location>
</feature>
<feature type="binding site" evidence="1">
    <location>
        <position position="226"/>
    </location>
    <ligand>
        <name>Mg(2+)</name>
        <dbReference type="ChEBI" id="CHEBI:18420"/>
    </ligand>
</feature>
<feature type="binding site" evidence="1">
    <location>
        <position position="228"/>
    </location>
    <ligand>
        <name>Mg(2+)</name>
        <dbReference type="ChEBI" id="CHEBI:18420"/>
    </ligand>
</feature>
<gene>
    <name type="primary">PRS3</name>
</gene>
<organism>
    <name type="scientific">Spinacia oleracea</name>
    <name type="common">Spinach</name>
    <dbReference type="NCBI Taxonomy" id="3562"/>
    <lineage>
        <taxon>Eukaryota</taxon>
        <taxon>Viridiplantae</taxon>
        <taxon>Streptophyta</taxon>
        <taxon>Embryophyta</taxon>
        <taxon>Tracheophyta</taxon>
        <taxon>Spermatophyta</taxon>
        <taxon>Magnoliopsida</taxon>
        <taxon>eudicotyledons</taxon>
        <taxon>Gunneridae</taxon>
        <taxon>Pentapetalae</taxon>
        <taxon>Caryophyllales</taxon>
        <taxon>Chenopodiaceae</taxon>
        <taxon>Chenopodioideae</taxon>
        <taxon>Anserineae</taxon>
        <taxon>Spinacia</taxon>
    </lineage>
</organism>
<dbReference type="EC" id="2.7.6.1"/>
<dbReference type="EMBL" id="AJ006942">
    <property type="protein sequence ID" value="CAB43601.1"/>
    <property type="molecule type" value="mRNA"/>
</dbReference>
<dbReference type="SMR" id="Q9XGA0"/>
<dbReference type="OrthoDB" id="10263753at2759"/>
<dbReference type="Proteomes" id="UP001155700">
    <property type="component" value="Unplaced"/>
</dbReference>
<dbReference type="GO" id="GO:0005737">
    <property type="term" value="C:cytoplasm"/>
    <property type="evidence" value="ECO:0000318"/>
    <property type="project" value="GO_Central"/>
</dbReference>
<dbReference type="GO" id="GO:0005739">
    <property type="term" value="C:mitochondrion"/>
    <property type="evidence" value="ECO:0007669"/>
    <property type="project" value="UniProtKB-SubCell"/>
</dbReference>
<dbReference type="GO" id="GO:0002189">
    <property type="term" value="C:ribose phosphate diphosphokinase complex"/>
    <property type="evidence" value="ECO:0000318"/>
    <property type="project" value="GO_Central"/>
</dbReference>
<dbReference type="GO" id="GO:0005524">
    <property type="term" value="F:ATP binding"/>
    <property type="evidence" value="ECO:0007669"/>
    <property type="project" value="UniProtKB-KW"/>
</dbReference>
<dbReference type="GO" id="GO:0016301">
    <property type="term" value="F:kinase activity"/>
    <property type="evidence" value="ECO:0007669"/>
    <property type="project" value="UniProtKB-KW"/>
</dbReference>
<dbReference type="GO" id="GO:0000287">
    <property type="term" value="F:magnesium ion binding"/>
    <property type="evidence" value="ECO:0007669"/>
    <property type="project" value="InterPro"/>
</dbReference>
<dbReference type="GO" id="GO:0004749">
    <property type="term" value="F:ribose phosphate diphosphokinase activity"/>
    <property type="evidence" value="ECO:0000318"/>
    <property type="project" value="GO_Central"/>
</dbReference>
<dbReference type="GO" id="GO:0006015">
    <property type="term" value="P:5-phosphoribose 1-diphosphate biosynthetic process"/>
    <property type="evidence" value="ECO:0000318"/>
    <property type="project" value="GO_Central"/>
</dbReference>
<dbReference type="GO" id="GO:0006164">
    <property type="term" value="P:purine nucleotide biosynthetic process"/>
    <property type="evidence" value="ECO:0000318"/>
    <property type="project" value="GO_Central"/>
</dbReference>
<dbReference type="CDD" id="cd06223">
    <property type="entry name" value="PRTases_typeI"/>
    <property type="match status" value="1"/>
</dbReference>
<dbReference type="FunFam" id="3.40.50.2020:FF:000034">
    <property type="entry name" value="Ribose-phosphate pyrophosphokinase 4"/>
    <property type="match status" value="1"/>
</dbReference>
<dbReference type="FunFam" id="3.40.50.2020:FF:000032">
    <property type="entry name" value="ribose-phosphate pyrophosphokinase 4"/>
    <property type="match status" value="1"/>
</dbReference>
<dbReference type="Gene3D" id="3.40.50.2020">
    <property type="match status" value="2"/>
</dbReference>
<dbReference type="InterPro" id="IPR029099">
    <property type="entry name" value="Pribosyltran_N"/>
</dbReference>
<dbReference type="InterPro" id="IPR000836">
    <property type="entry name" value="PRibTrfase_dom"/>
</dbReference>
<dbReference type="InterPro" id="IPR029057">
    <property type="entry name" value="PRTase-like"/>
</dbReference>
<dbReference type="InterPro" id="IPR005946">
    <property type="entry name" value="Rib-P_diPkinase"/>
</dbReference>
<dbReference type="NCBIfam" id="TIGR01251">
    <property type="entry name" value="ribP_PPkin"/>
    <property type="match status" value="1"/>
</dbReference>
<dbReference type="PANTHER" id="PTHR10210">
    <property type="entry name" value="RIBOSE-PHOSPHATE DIPHOSPHOKINASE FAMILY MEMBER"/>
    <property type="match status" value="1"/>
</dbReference>
<dbReference type="PANTHER" id="PTHR10210:SF45">
    <property type="entry name" value="RIBOSE-PHOSPHATE PYROPHOSPHOKINASE 3, CHLOROPLASTIC"/>
    <property type="match status" value="1"/>
</dbReference>
<dbReference type="Pfam" id="PF00156">
    <property type="entry name" value="Pribosyltran"/>
    <property type="match status" value="1"/>
</dbReference>
<dbReference type="Pfam" id="PF13793">
    <property type="entry name" value="Pribosyltran_N"/>
    <property type="match status" value="1"/>
</dbReference>
<dbReference type="SMART" id="SM01400">
    <property type="entry name" value="Pribosyltran_N"/>
    <property type="match status" value="1"/>
</dbReference>
<dbReference type="SUPFAM" id="SSF53271">
    <property type="entry name" value="PRTase-like"/>
    <property type="match status" value="2"/>
</dbReference>
<name>KPRS3_SPIOL</name>
<proteinExistence type="evidence at transcript level"/>
<comment type="catalytic activity">
    <reaction>
        <text>D-ribose 5-phosphate + ATP = 5-phospho-alpha-D-ribose 1-diphosphate + AMP + H(+)</text>
        <dbReference type="Rhea" id="RHEA:15609"/>
        <dbReference type="ChEBI" id="CHEBI:15378"/>
        <dbReference type="ChEBI" id="CHEBI:30616"/>
        <dbReference type="ChEBI" id="CHEBI:58017"/>
        <dbReference type="ChEBI" id="CHEBI:78346"/>
        <dbReference type="ChEBI" id="CHEBI:456215"/>
        <dbReference type="EC" id="2.7.6.1"/>
    </reaction>
</comment>
<comment type="subcellular location">
    <subcellularLocation>
        <location evidence="3">Mitochondrion</location>
    </subcellularLocation>
</comment>
<comment type="similarity">
    <text evidence="3">Belongs to the ribose-phosphate pyrophosphokinase family.</text>
</comment>
<reference key="1">
    <citation type="journal article" date="1999" name="Plant Physiol.">
        <title>Organellar and cytosolic localization of four phosphoribosyl diphosphate synthase isozymes in spinach.</title>
        <authorList>
            <person name="Krath B.N."/>
            <person name="Hove-Jensen B."/>
        </authorList>
    </citation>
    <scope>NUCLEOTIDE SEQUENCE [MRNA]</scope>
    <source>
        <tissue>Leaf</tissue>
    </source>
</reference>